<name>GTA1L_MOUSE</name>
<organism>
    <name type="scientific">Mus musculus</name>
    <name type="common">Mouse</name>
    <dbReference type="NCBI Taxonomy" id="10090"/>
    <lineage>
        <taxon>Eukaryota</taxon>
        <taxon>Metazoa</taxon>
        <taxon>Chordata</taxon>
        <taxon>Craniata</taxon>
        <taxon>Vertebrata</taxon>
        <taxon>Euteleostomi</taxon>
        <taxon>Mammalia</taxon>
        <taxon>Eutheria</taxon>
        <taxon>Euarchontoglires</taxon>
        <taxon>Glires</taxon>
        <taxon>Rodentia</taxon>
        <taxon>Myomorpha</taxon>
        <taxon>Muroidea</taxon>
        <taxon>Muridae</taxon>
        <taxon>Murinae</taxon>
        <taxon>Mus</taxon>
        <taxon>Mus</taxon>
    </lineage>
</organism>
<comment type="function">
    <text evidence="1">Synthesizes the galactose-alpha(1,3)-galactose group by catalyzing the transfer of a galactose residue, with an alpha-1,3 linkage, on terminal lactosaminide (Gal-beta-1,4-GlcNAc-R) disaccharide borne by a glycoprotein or a glycolipid.</text>
</comment>
<comment type="catalytic activity">
    <reaction evidence="2">
        <text>a beta-D-galactosyl-(1-&gt;4)-N-acetyl-beta-D-glucosaminyl derivative + UDP-alpha-D-galactose = an alpha-D-galactosyl-(1-&gt;3)-beta-D-galactosyl-(1-&gt;4)-N-acetyl-beta-D-glucosaminyl derivative + UDP + H(+)</text>
        <dbReference type="Rhea" id="RHEA:13013"/>
        <dbReference type="ChEBI" id="CHEBI:15378"/>
        <dbReference type="ChEBI" id="CHEBI:58223"/>
        <dbReference type="ChEBI" id="CHEBI:66914"/>
        <dbReference type="ChEBI" id="CHEBI:133507"/>
        <dbReference type="ChEBI" id="CHEBI:138024"/>
        <dbReference type="EC" id="2.4.1.87"/>
    </reaction>
</comment>
<comment type="cofactor">
    <cofactor evidence="2">
        <name>Mn(2+)</name>
        <dbReference type="ChEBI" id="CHEBI:29035"/>
    </cofactor>
    <text evidence="2">Binds 1 Mn(2+) ion per subunit.</text>
</comment>
<comment type="pathway">
    <text evidence="2">Protein modification; protein glycosylation.</text>
</comment>
<comment type="subcellular location">
    <subcellularLocation>
        <location evidence="1">Golgi apparatus</location>
        <location evidence="1">Golgi stack membrane</location>
        <topology evidence="1">Single-pass type II membrane protein</topology>
    </subcellularLocation>
    <text evidence="1">Membrane-bound form in trans cisternae of Golgi.</text>
</comment>
<comment type="domain">
    <text evidence="1">The conserved DXD motif is involved in cofactor binding. The manganese ion interacts with the beta-phosphate group of UDP and may also have a role in catalysis (By similarity).</text>
</comment>
<comment type="miscellaneous">
    <text>This gene is not expressed in humans.</text>
</comment>
<comment type="similarity">
    <text evidence="4">Belongs to the glycosyltransferase 6 family.</text>
</comment>
<accession>A2AUQ7</accession>
<accession>Q9D4R9</accession>
<proteinExistence type="evidence at transcript level"/>
<dbReference type="EC" id="2.4.1.87" evidence="2"/>
<dbReference type="EMBL" id="AK016248">
    <property type="protein sequence ID" value="BAB30163.1"/>
    <property type="molecule type" value="mRNA"/>
</dbReference>
<dbReference type="EMBL" id="AL773523">
    <property type="status" value="NOT_ANNOTATED_CDS"/>
    <property type="molecule type" value="Genomic_DNA"/>
</dbReference>
<dbReference type="EMBL" id="AL929199">
    <property type="status" value="NOT_ANNOTATED_CDS"/>
    <property type="molecule type" value="Genomic_DNA"/>
</dbReference>
<dbReference type="EMBL" id="CH466542">
    <property type="protein sequence ID" value="EDL08652.1"/>
    <property type="molecule type" value="Genomic_DNA"/>
</dbReference>
<dbReference type="CCDS" id="CCDS50575.1"/>
<dbReference type="RefSeq" id="NP_083739.1">
    <property type="nucleotide sequence ID" value="NM_029463.1"/>
</dbReference>
<dbReference type="RefSeq" id="XP_006498459.1">
    <property type="nucleotide sequence ID" value="XM_006498396.2"/>
</dbReference>
<dbReference type="SMR" id="A2AUQ7"/>
<dbReference type="FunCoup" id="A2AUQ7">
    <property type="interactions" value="6"/>
</dbReference>
<dbReference type="STRING" id="10090.ENSMUSP00000028243"/>
<dbReference type="CAZy" id="GT6">
    <property type="family name" value="Glycosyltransferase Family 6"/>
</dbReference>
<dbReference type="GlyCosmos" id="A2AUQ7">
    <property type="glycosylation" value="2 sites, No reported glycans"/>
</dbReference>
<dbReference type="GlyGen" id="A2AUQ7">
    <property type="glycosylation" value="2 sites"/>
</dbReference>
<dbReference type="iPTMnet" id="A2AUQ7"/>
<dbReference type="PhosphoSitePlus" id="A2AUQ7"/>
<dbReference type="PaxDb" id="10090-ENSMUSP00000028243"/>
<dbReference type="ProteomicsDB" id="271183"/>
<dbReference type="Ensembl" id="ENSMUST00000028243.2">
    <property type="protein sequence ID" value="ENSMUSP00000028243.2"/>
    <property type="gene ID" value="ENSMUSG00000026882.2"/>
</dbReference>
<dbReference type="GeneID" id="75859"/>
<dbReference type="KEGG" id="mmu:75859"/>
<dbReference type="UCSC" id="uc012bum.1">
    <property type="organism name" value="mouse"/>
</dbReference>
<dbReference type="AGR" id="MGI:1923109"/>
<dbReference type="MGI" id="MGI:1923109">
    <property type="gene designation" value="4930568D16Rik"/>
</dbReference>
<dbReference type="VEuPathDB" id="HostDB:ENSMUSG00000026882"/>
<dbReference type="eggNOG" id="ENOG502RU0J">
    <property type="taxonomic scope" value="Eukaryota"/>
</dbReference>
<dbReference type="GeneTree" id="ENSGT00950000182858"/>
<dbReference type="HOGENOM" id="CLU_062445_0_0_1"/>
<dbReference type="InParanoid" id="A2AUQ7"/>
<dbReference type="OMA" id="HEVNFLF"/>
<dbReference type="OrthoDB" id="10013941at2759"/>
<dbReference type="PhylomeDB" id="A2AUQ7"/>
<dbReference type="TreeFam" id="TF330991"/>
<dbReference type="UniPathway" id="UPA00378"/>
<dbReference type="BioGRID-ORCS" id="75859">
    <property type="hits" value="3 hits in 76 CRISPR screens"/>
</dbReference>
<dbReference type="PRO" id="PR:A2AUQ7"/>
<dbReference type="Proteomes" id="UP000000589">
    <property type="component" value="Chromosome 2"/>
</dbReference>
<dbReference type="RNAct" id="A2AUQ7">
    <property type="molecule type" value="protein"/>
</dbReference>
<dbReference type="Bgee" id="ENSMUSG00000026882">
    <property type="expression patterns" value="Expressed in spermatid and 11 other cell types or tissues"/>
</dbReference>
<dbReference type="GO" id="GO:0032580">
    <property type="term" value="C:Golgi cisterna membrane"/>
    <property type="evidence" value="ECO:0007669"/>
    <property type="project" value="UniProtKB-SubCell"/>
</dbReference>
<dbReference type="GO" id="GO:0046872">
    <property type="term" value="F:metal ion binding"/>
    <property type="evidence" value="ECO:0007669"/>
    <property type="project" value="UniProtKB-KW"/>
</dbReference>
<dbReference type="GO" id="GO:0047276">
    <property type="term" value="F:N-acetyllactosaminide 3-alpha-galactosyltransferase activity"/>
    <property type="evidence" value="ECO:0007669"/>
    <property type="project" value="UniProtKB-EC"/>
</dbReference>
<dbReference type="GO" id="GO:0005975">
    <property type="term" value="P:carbohydrate metabolic process"/>
    <property type="evidence" value="ECO:0007669"/>
    <property type="project" value="InterPro"/>
</dbReference>
<dbReference type="GO" id="GO:0006486">
    <property type="term" value="P:protein glycosylation"/>
    <property type="evidence" value="ECO:0007669"/>
    <property type="project" value="UniProtKB-UniPathway"/>
</dbReference>
<dbReference type="FunFam" id="3.90.550.10:FF:000022">
    <property type="entry name" value="Histo-blood group ABO system transferase"/>
    <property type="match status" value="1"/>
</dbReference>
<dbReference type="Gene3D" id="3.90.550.10">
    <property type="entry name" value="Spore Coat Polysaccharide Biosynthesis Protein SpsA, Chain A"/>
    <property type="match status" value="1"/>
</dbReference>
<dbReference type="InterPro" id="IPR005076">
    <property type="entry name" value="Glyco_trans_6"/>
</dbReference>
<dbReference type="InterPro" id="IPR029044">
    <property type="entry name" value="Nucleotide-diphossugar_trans"/>
</dbReference>
<dbReference type="PANTHER" id="PTHR10462">
    <property type="entry name" value="GLYCOSYLTRANSFERASE-RELATED"/>
    <property type="match status" value="1"/>
</dbReference>
<dbReference type="PANTHER" id="PTHR10462:SF46">
    <property type="entry name" value="N-ACETYLLACTOSAMINIDE ALPHA-1,3-GALACTOSYLTRANSFERASE-LIKE 1"/>
    <property type="match status" value="1"/>
</dbReference>
<dbReference type="Pfam" id="PF03414">
    <property type="entry name" value="Glyco_transf_6"/>
    <property type="match status" value="1"/>
</dbReference>
<dbReference type="SUPFAM" id="SSF53448">
    <property type="entry name" value="Nucleotide-diphospho-sugar transferases"/>
    <property type="match status" value="1"/>
</dbReference>
<protein>
    <recommendedName>
        <fullName>N-acetyllactosaminide alpha-1,3-galactosyltransferase-like 1</fullName>
        <ecNumber evidence="2">2.4.1.87</ecNumber>
    </recommendedName>
</protein>
<evidence type="ECO:0000250" key="1"/>
<evidence type="ECO:0000250" key="2">
    <source>
        <dbReference type="UniProtKB" id="P14769"/>
    </source>
</evidence>
<evidence type="ECO:0000255" key="3"/>
<evidence type="ECO:0000305" key="4"/>
<reference key="1">
    <citation type="journal article" date="2005" name="Science">
        <title>The transcriptional landscape of the mammalian genome.</title>
        <authorList>
            <person name="Carninci P."/>
            <person name="Kasukawa T."/>
            <person name="Katayama S."/>
            <person name="Gough J."/>
            <person name="Frith M.C."/>
            <person name="Maeda N."/>
            <person name="Oyama R."/>
            <person name="Ravasi T."/>
            <person name="Lenhard B."/>
            <person name="Wells C."/>
            <person name="Kodzius R."/>
            <person name="Shimokawa K."/>
            <person name="Bajic V.B."/>
            <person name="Brenner S.E."/>
            <person name="Batalov S."/>
            <person name="Forrest A.R."/>
            <person name="Zavolan M."/>
            <person name="Davis M.J."/>
            <person name="Wilming L.G."/>
            <person name="Aidinis V."/>
            <person name="Allen J.E."/>
            <person name="Ambesi-Impiombato A."/>
            <person name="Apweiler R."/>
            <person name="Aturaliya R.N."/>
            <person name="Bailey T.L."/>
            <person name="Bansal M."/>
            <person name="Baxter L."/>
            <person name="Beisel K.W."/>
            <person name="Bersano T."/>
            <person name="Bono H."/>
            <person name="Chalk A.M."/>
            <person name="Chiu K.P."/>
            <person name="Choudhary V."/>
            <person name="Christoffels A."/>
            <person name="Clutterbuck D.R."/>
            <person name="Crowe M.L."/>
            <person name="Dalla E."/>
            <person name="Dalrymple B.P."/>
            <person name="de Bono B."/>
            <person name="Della Gatta G."/>
            <person name="di Bernardo D."/>
            <person name="Down T."/>
            <person name="Engstrom P."/>
            <person name="Fagiolini M."/>
            <person name="Faulkner G."/>
            <person name="Fletcher C.F."/>
            <person name="Fukushima T."/>
            <person name="Furuno M."/>
            <person name="Futaki S."/>
            <person name="Gariboldi M."/>
            <person name="Georgii-Hemming P."/>
            <person name="Gingeras T.R."/>
            <person name="Gojobori T."/>
            <person name="Green R.E."/>
            <person name="Gustincich S."/>
            <person name="Harbers M."/>
            <person name="Hayashi Y."/>
            <person name="Hensch T.K."/>
            <person name="Hirokawa N."/>
            <person name="Hill D."/>
            <person name="Huminiecki L."/>
            <person name="Iacono M."/>
            <person name="Ikeo K."/>
            <person name="Iwama A."/>
            <person name="Ishikawa T."/>
            <person name="Jakt M."/>
            <person name="Kanapin A."/>
            <person name="Katoh M."/>
            <person name="Kawasawa Y."/>
            <person name="Kelso J."/>
            <person name="Kitamura H."/>
            <person name="Kitano H."/>
            <person name="Kollias G."/>
            <person name="Krishnan S.P."/>
            <person name="Kruger A."/>
            <person name="Kummerfeld S.K."/>
            <person name="Kurochkin I.V."/>
            <person name="Lareau L.F."/>
            <person name="Lazarevic D."/>
            <person name="Lipovich L."/>
            <person name="Liu J."/>
            <person name="Liuni S."/>
            <person name="McWilliam S."/>
            <person name="Madan Babu M."/>
            <person name="Madera M."/>
            <person name="Marchionni L."/>
            <person name="Matsuda H."/>
            <person name="Matsuzawa S."/>
            <person name="Miki H."/>
            <person name="Mignone F."/>
            <person name="Miyake S."/>
            <person name="Morris K."/>
            <person name="Mottagui-Tabar S."/>
            <person name="Mulder N."/>
            <person name="Nakano N."/>
            <person name="Nakauchi H."/>
            <person name="Ng P."/>
            <person name="Nilsson R."/>
            <person name="Nishiguchi S."/>
            <person name="Nishikawa S."/>
            <person name="Nori F."/>
            <person name="Ohara O."/>
            <person name="Okazaki Y."/>
            <person name="Orlando V."/>
            <person name="Pang K.C."/>
            <person name="Pavan W.J."/>
            <person name="Pavesi G."/>
            <person name="Pesole G."/>
            <person name="Petrovsky N."/>
            <person name="Piazza S."/>
            <person name="Reed J."/>
            <person name="Reid J.F."/>
            <person name="Ring B.Z."/>
            <person name="Ringwald M."/>
            <person name="Rost B."/>
            <person name="Ruan Y."/>
            <person name="Salzberg S.L."/>
            <person name="Sandelin A."/>
            <person name="Schneider C."/>
            <person name="Schoenbach C."/>
            <person name="Sekiguchi K."/>
            <person name="Semple C.A."/>
            <person name="Seno S."/>
            <person name="Sessa L."/>
            <person name="Sheng Y."/>
            <person name="Shibata Y."/>
            <person name="Shimada H."/>
            <person name="Shimada K."/>
            <person name="Silva D."/>
            <person name="Sinclair B."/>
            <person name="Sperling S."/>
            <person name="Stupka E."/>
            <person name="Sugiura K."/>
            <person name="Sultana R."/>
            <person name="Takenaka Y."/>
            <person name="Taki K."/>
            <person name="Tammoja K."/>
            <person name="Tan S.L."/>
            <person name="Tang S."/>
            <person name="Taylor M.S."/>
            <person name="Tegner J."/>
            <person name="Teichmann S.A."/>
            <person name="Ueda H.R."/>
            <person name="van Nimwegen E."/>
            <person name="Verardo R."/>
            <person name="Wei C.L."/>
            <person name="Yagi K."/>
            <person name="Yamanishi H."/>
            <person name="Zabarovsky E."/>
            <person name="Zhu S."/>
            <person name="Zimmer A."/>
            <person name="Hide W."/>
            <person name="Bult C."/>
            <person name="Grimmond S.M."/>
            <person name="Teasdale R.D."/>
            <person name="Liu E.T."/>
            <person name="Brusic V."/>
            <person name="Quackenbush J."/>
            <person name="Wahlestedt C."/>
            <person name="Mattick J.S."/>
            <person name="Hume D.A."/>
            <person name="Kai C."/>
            <person name="Sasaki D."/>
            <person name="Tomaru Y."/>
            <person name="Fukuda S."/>
            <person name="Kanamori-Katayama M."/>
            <person name="Suzuki M."/>
            <person name="Aoki J."/>
            <person name="Arakawa T."/>
            <person name="Iida J."/>
            <person name="Imamura K."/>
            <person name="Itoh M."/>
            <person name="Kato T."/>
            <person name="Kawaji H."/>
            <person name="Kawagashira N."/>
            <person name="Kawashima T."/>
            <person name="Kojima M."/>
            <person name="Kondo S."/>
            <person name="Konno H."/>
            <person name="Nakano K."/>
            <person name="Ninomiya N."/>
            <person name="Nishio T."/>
            <person name="Okada M."/>
            <person name="Plessy C."/>
            <person name="Shibata K."/>
            <person name="Shiraki T."/>
            <person name="Suzuki S."/>
            <person name="Tagami M."/>
            <person name="Waki K."/>
            <person name="Watahiki A."/>
            <person name="Okamura-Oho Y."/>
            <person name="Suzuki H."/>
            <person name="Kawai J."/>
            <person name="Hayashizaki Y."/>
        </authorList>
    </citation>
    <scope>NUCLEOTIDE SEQUENCE [LARGE SCALE MRNA]</scope>
    <source>
        <strain>C57BL/6J</strain>
        <tissue>Testis</tissue>
    </source>
</reference>
<reference key="2">
    <citation type="journal article" date="2009" name="PLoS Biol.">
        <title>Lineage-specific biology revealed by a finished genome assembly of the mouse.</title>
        <authorList>
            <person name="Church D.M."/>
            <person name="Goodstadt L."/>
            <person name="Hillier L.W."/>
            <person name="Zody M.C."/>
            <person name="Goldstein S."/>
            <person name="She X."/>
            <person name="Bult C.J."/>
            <person name="Agarwala R."/>
            <person name="Cherry J.L."/>
            <person name="DiCuccio M."/>
            <person name="Hlavina W."/>
            <person name="Kapustin Y."/>
            <person name="Meric P."/>
            <person name="Maglott D."/>
            <person name="Birtle Z."/>
            <person name="Marques A.C."/>
            <person name="Graves T."/>
            <person name="Zhou S."/>
            <person name="Teague B."/>
            <person name="Potamousis K."/>
            <person name="Churas C."/>
            <person name="Place M."/>
            <person name="Herschleb J."/>
            <person name="Runnheim R."/>
            <person name="Forrest D."/>
            <person name="Amos-Landgraf J."/>
            <person name="Schwartz D.C."/>
            <person name="Cheng Z."/>
            <person name="Lindblad-Toh K."/>
            <person name="Eichler E.E."/>
            <person name="Ponting C.P."/>
        </authorList>
    </citation>
    <scope>NUCLEOTIDE SEQUENCE [LARGE SCALE GENOMIC DNA]</scope>
    <source>
        <strain>C57BL/6J</strain>
    </source>
</reference>
<reference key="3">
    <citation type="submission" date="2005-09" db="EMBL/GenBank/DDBJ databases">
        <authorList>
            <person name="Mural R.J."/>
            <person name="Adams M.D."/>
            <person name="Myers E.W."/>
            <person name="Smith H.O."/>
            <person name="Venter J.C."/>
        </authorList>
    </citation>
    <scope>NUCLEOTIDE SEQUENCE [LARGE SCALE GENOMIC DNA]</scope>
</reference>
<gene>
    <name type="primary">Ggta1l1</name>
</gene>
<feature type="chain" id="PRO_0000428936" description="N-acetyllactosaminide alpha-1,3-galactosyltransferase-like 1">
    <location>
        <begin position="1"/>
        <end position="319"/>
    </location>
</feature>
<feature type="topological domain" description="Cytoplasmic" evidence="3">
    <location>
        <begin position="1"/>
        <end position="6"/>
    </location>
</feature>
<feature type="transmembrane region" description="Helical; Signal-anchor for type II membrane protein" evidence="3">
    <location>
        <begin position="7"/>
        <end position="26"/>
    </location>
</feature>
<feature type="topological domain" description="Lumenal" evidence="3">
    <location>
        <begin position="27"/>
        <end position="319"/>
    </location>
</feature>
<feature type="active site" description="Nucleophile" evidence="2">
    <location>
        <position position="278"/>
    </location>
</feature>
<feature type="binding site" evidence="2">
    <location>
        <begin position="97"/>
        <end position="102"/>
    </location>
    <ligand>
        <name>substrate</name>
    </ligand>
</feature>
<feature type="binding site" evidence="2">
    <location>
        <begin position="188"/>
        <end position="190"/>
    </location>
    <ligand>
        <name>substrate</name>
    </ligand>
</feature>
<feature type="binding site" evidence="2">
    <location>
        <begin position="210"/>
        <end position="213"/>
    </location>
    <ligand>
        <name>substrate</name>
    </ligand>
</feature>
<feature type="glycosylation site" description="N-linked (GlcNAc...) asparagine" evidence="3">
    <location>
        <position position="89"/>
    </location>
</feature>
<feature type="glycosylation site" description="N-linked (GlcNAc...) asparagine" evidence="3">
    <location>
        <position position="101"/>
    </location>
</feature>
<feature type="sequence conflict" description="In Ref. 1; BAB30163." evidence="4" ref="1">
    <original>A</original>
    <variation>T</variation>
    <location>
        <position position="114"/>
    </location>
</feature>
<feature type="sequence conflict" description="In Ref. 1; BAB30163." evidence="4" ref="1">
    <original>I</original>
    <variation>V</variation>
    <location>
        <position position="177"/>
    </location>
</feature>
<feature type="sequence conflict" description="In Ref. 1; BAB30163." evidence="4" ref="1">
    <original>S</original>
    <variation>R</variation>
    <location>
        <position position="279"/>
    </location>
</feature>
<sequence length="319" mass="37953">MQYKKEALLLMLFAVLLALTQRFSYSRTKDHLQKMYACWKDHLEEPHLSTWFDPKKRPDVIATTGWLAPVLWEGTYNREVLEQYYKRLNITIGLAVFATGNFSKEPLRRFIKSADKYFMVGYNVIFYILADSTYNLPYFELGPLRTLKTWRLFEEEMCQDCNLRNMNNMHSKIIQCIQYEVNFLFMMAVNQTFKNNFGVETLGKSVAQLHAWWYFKKPRDFPYERRTKSAAFIPFEKGDFYYHRAIVGGTPLNVLNLIEQYIKGITDDNTNKLVSTFESHLNKYFFINKPARVLSPEYNWDPRFKTPPEIKHIKIAWKP</sequence>
<keyword id="KW-0325">Glycoprotein</keyword>
<keyword id="KW-0328">Glycosyltransferase</keyword>
<keyword id="KW-0333">Golgi apparatus</keyword>
<keyword id="KW-0464">Manganese</keyword>
<keyword id="KW-0472">Membrane</keyword>
<keyword id="KW-0479">Metal-binding</keyword>
<keyword id="KW-1185">Reference proteome</keyword>
<keyword id="KW-0735">Signal-anchor</keyword>
<keyword id="KW-0808">Transferase</keyword>
<keyword id="KW-0812">Transmembrane</keyword>
<keyword id="KW-1133">Transmembrane helix</keyword>